<evidence type="ECO:0000250" key="1"/>
<evidence type="ECO:0000255" key="2"/>
<evidence type="ECO:0000255" key="3">
    <source>
        <dbReference type="PROSITE-ProRule" id="PRU00543"/>
    </source>
</evidence>
<evidence type="ECO:0000256" key="4">
    <source>
        <dbReference type="SAM" id="MobiDB-lite"/>
    </source>
</evidence>
<evidence type="ECO:0000269" key="5">
    <source>
    </source>
</evidence>
<evidence type="ECO:0000269" key="6">
    <source>
    </source>
</evidence>
<evidence type="ECO:0000269" key="7">
    <source>
    </source>
</evidence>
<evidence type="ECO:0000269" key="8">
    <source>
    </source>
</evidence>
<evidence type="ECO:0000269" key="9">
    <source>
    </source>
</evidence>
<evidence type="ECO:0000269" key="10">
    <source>
    </source>
</evidence>
<evidence type="ECO:0000269" key="11">
    <source>
    </source>
</evidence>
<evidence type="ECO:0000269" key="12">
    <source>
    </source>
</evidence>
<evidence type="ECO:0000269" key="13">
    <source>
    </source>
</evidence>
<evidence type="ECO:0000303" key="14">
    <source>
    </source>
</evidence>
<evidence type="ECO:0000303" key="15">
    <source>
    </source>
</evidence>
<evidence type="ECO:0000303" key="16">
    <source>
    </source>
</evidence>
<evidence type="ECO:0000305" key="17"/>
<evidence type="ECO:0007829" key="18">
    <source>
        <dbReference type="PDB" id="7PXE"/>
    </source>
</evidence>
<evidence type="ECO:0007829" key="19">
    <source>
        <dbReference type="PDB" id="7PXF"/>
    </source>
</evidence>
<evidence type="ECO:0007829" key="20">
    <source>
        <dbReference type="PDB" id="7PXH"/>
    </source>
</evidence>
<accession>Q03720</accession>
<accession>A4V3D4</accession>
<accession>Q24369</accession>
<accession>Q24384</accession>
<accession>Q24385</accession>
<accession>Q59DU0</accession>
<accession>Q59DU1</accession>
<accession>Q59DU2</accession>
<accession>Q59DU3</accession>
<accession>Q59DU4</accession>
<accession>Q59DU5</accession>
<accession>Q59DU6</accession>
<accession>Q59DU7</accession>
<accession>Q59DU8</accession>
<accession>Q59DU9</accession>
<accession>Q59DV0</accession>
<accession>Q59DV1</accession>
<accession>Q59DV2</accession>
<accession>Q7JP74</accession>
<accession>Q7KS13</accession>
<accession>Q86NK5</accession>
<accession>Q8IMV9</accession>
<accession>Q9TWA1</accession>
<accession>Q9VC51</accession>
<dbReference type="EMBL" id="M69053">
    <property type="protein sequence ID" value="AAA28902.1"/>
    <property type="status" value="ALT_INIT"/>
    <property type="molecule type" value="mRNA"/>
</dbReference>
<dbReference type="EMBL" id="M96840">
    <property type="protein sequence ID" value="AAA28651.1"/>
    <property type="molecule type" value="mRNA"/>
</dbReference>
<dbReference type="EMBL" id="AE014297">
    <property type="protein sequence ID" value="AAF56324.1"/>
    <property type="molecule type" value="Genomic_DNA"/>
</dbReference>
<dbReference type="EMBL" id="AE014297">
    <property type="protein sequence ID" value="AAN14013.1"/>
    <property type="molecule type" value="Genomic_DNA"/>
</dbReference>
<dbReference type="EMBL" id="AE014297">
    <property type="protein sequence ID" value="AAS65211.1"/>
    <property type="molecule type" value="Genomic_DNA"/>
</dbReference>
<dbReference type="EMBL" id="AE014297">
    <property type="protein sequence ID" value="AAX52977.1"/>
    <property type="molecule type" value="Genomic_DNA"/>
</dbReference>
<dbReference type="EMBL" id="AE014297">
    <property type="protein sequence ID" value="AAX52978.1"/>
    <property type="molecule type" value="Genomic_DNA"/>
</dbReference>
<dbReference type="EMBL" id="AE014297">
    <property type="protein sequence ID" value="AAX52979.1"/>
    <property type="molecule type" value="Genomic_DNA"/>
</dbReference>
<dbReference type="EMBL" id="AE014297">
    <property type="protein sequence ID" value="AAX52980.2"/>
    <property type="molecule type" value="Genomic_DNA"/>
</dbReference>
<dbReference type="EMBL" id="AE014297">
    <property type="protein sequence ID" value="AAX52981.1"/>
    <property type="molecule type" value="Genomic_DNA"/>
</dbReference>
<dbReference type="EMBL" id="AE014297">
    <property type="protein sequence ID" value="AAX52982.1"/>
    <property type="molecule type" value="Genomic_DNA"/>
</dbReference>
<dbReference type="EMBL" id="AE014297">
    <property type="protein sequence ID" value="AAX52983.1"/>
    <property type="molecule type" value="Genomic_DNA"/>
</dbReference>
<dbReference type="EMBL" id="AE014297">
    <property type="protein sequence ID" value="AAX52984.1"/>
    <property type="molecule type" value="Genomic_DNA"/>
</dbReference>
<dbReference type="EMBL" id="AE014297">
    <property type="protein sequence ID" value="AAX52985.1"/>
    <property type="molecule type" value="Genomic_DNA"/>
</dbReference>
<dbReference type="EMBL" id="AE014297">
    <property type="protein sequence ID" value="AAX52986.1"/>
    <property type="molecule type" value="Genomic_DNA"/>
</dbReference>
<dbReference type="EMBL" id="AE014297">
    <property type="protein sequence ID" value="AAX52987.1"/>
    <property type="molecule type" value="Genomic_DNA"/>
</dbReference>
<dbReference type="EMBL" id="AE014297">
    <property type="protein sequence ID" value="AAX52988.1"/>
    <property type="molecule type" value="Genomic_DNA"/>
</dbReference>
<dbReference type="EMBL" id="AE014297">
    <property type="protein sequence ID" value="AAX52989.1"/>
    <property type="molecule type" value="Genomic_DNA"/>
</dbReference>
<dbReference type="EMBL" id="AE014297">
    <property type="protein sequence ID" value="AAX52990.1"/>
    <property type="molecule type" value="Genomic_DNA"/>
</dbReference>
<dbReference type="EMBL" id="BT004876">
    <property type="protein sequence ID" value="AAO45232.1"/>
    <property type="status" value="ALT_FRAME"/>
    <property type="molecule type" value="mRNA"/>
</dbReference>
<dbReference type="EMBL" id="U40315">
    <property type="protein sequence ID" value="AAC47020.1"/>
    <property type="molecule type" value="Genomic_DNA"/>
</dbReference>
<dbReference type="EMBL" id="U40315">
    <property type="protein sequence ID" value="AAC47021.1"/>
    <property type="molecule type" value="Genomic_DNA"/>
</dbReference>
<dbReference type="PIR" id="A39800">
    <property type="entry name" value="A39800"/>
</dbReference>
<dbReference type="PIR" id="C39800">
    <property type="entry name" value="C39800"/>
</dbReference>
<dbReference type="PIR" id="JH0697">
    <property type="entry name" value="JH0697"/>
</dbReference>
<dbReference type="PIR" id="PS0438">
    <property type="entry name" value="PS0438"/>
</dbReference>
<dbReference type="PIR" id="PS0439">
    <property type="entry name" value="PS0439"/>
</dbReference>
<dbReference type="PIR" id="PS0440">
    <property type="entry name" value="PS0440"/>
</dbReference>
<dbReference type="PIR" id="PS0441">
    <property type="entry name" value="PS0441"/>
</dbReference>
<dbReference type="PIR" id="PS0446">
    <property type="entry name" value="PS0446"/>
</dbReference>
<dbReference type="RefSeq" id="NP_001014651.1">
    <molecule id="Q03720-20"/>
    <property type="nucleotide sequence ID" value="NM_001014651.3"/>
</dbReference>
<dbReference type="RefSeq" id="NP_001014652.1">
    <molecule id="Q03720-19"/>
    <property type="nucleotide sequence ID" value="NM_001014652.3"/>
</dbReference>
<dbReference type="RefSeq" id="NP_001014653.1">
    <molecule id="Q03720-18"/>
    <property type="nucleotide sequence ID" value="NM_001014653.3"/>
</dbReference>
<dbReference type="RefSeq" id="NP_001014654.1">
    <molecule id="Q03720-1"/>
    <property type="nucleotide sequence ID" value="NM_001014654.3"/>
</dbReference>
<dbReference type="RefSeq" id="NP_001014655.1">
    <molecule id="Q03720-17"/>
    <property type="nucleotide sequence ID" value="NM_001014655.3"/>
</dbReference>
<dbReference type="RefSeq" id="NP_001014656.1">
    <molecule id="Q03720-16"/>
    <property type="nucleotide sequence ID" value="NM_001014656.3"/>
</dbReference>
<dbReference type="RefSeq" id="NP_001014657.1">
    <molecule id="Q03720-15"/>
    <property type="nucleotide sequence ID" value="NM_001014657.3"/>
</dbReference>
<dbReference type="RefSeq" id="NP_001014658.1">
    <molecule id="Q03720-14"/>
    <property type="nucleotide sequence ID" value="NM_001014658.3"/>
</dbReference>
<dbReference type="RefSeq" id="NP_001014659.1">
    <molecule id="Q03720-13"/>
    <property type="nucleotide sequence ID" value="NM_001014659.3"/>
</dbReference>
<dbReference type="RefSeq" id="NP_001014660.1">
    <molecule id="Q03720-12"/>
    <property type="nucleotide sequence ID" value="NM_001014660.3"/>
</dbReference>
<dbReference type="RefSeq" id="NP_001014661.2">
    <molecule id="Q03720-3"/>
    <property type="nucleotide sequence ID" value="NM_001014661.4"/>
</dbReference>
<dbReference type="RefSeq" id="NP_001014662.1">
    <molecule id="Q03720-11"/>
    <property type="nucleotide sequence ID" value="NM_001014662.3"/>
</dbReference>
<dbReference type="RefSeq" id="NP_001014663.1">
    <molecule id="Q03720-10"/>
    <property type="nucleotide sequence ID" value="NM_001014663.3"/>
</dbReference>
<dbReference type="RefSeq" id="NP_001014664.1">
    <molecule id="Q03720-9"/>
    <property type="nucleotide sequence ID" value="NM_001014664.3"/>
</dbReference>
<dbReference type="RefSeq" id="NP_524486.2">
    <molecule id="Q03720-5"/>
    <property type="nucleotide sequence ID" value="NM_079762.4"/>
</dbReference>
<dbReference type="RefSeq" id="NP_733029.1">
    <molecule id="Q03720-7"/>
    <property type="nucleotide sequence ID" value="NM_170164.4"/>
</dbReference>
<dbReference type="RefSeq" id="NP_996289.1">
    <molecule id="Q03720-8"/>
    <property type="nucleotide sequence ID" value="NM_206566.4"/>
</dbReference>
<dbReference type="PDB" id="7PXE">
    <property type="method" value="EM"/>
    <property type="resolution" value="2.38 A"/>
    <property type="chains" value="A/B/C/D=1-1200"/>
</dbReference>
<dbReference type="PDB" id="7PXF">
    <property type="method" value="EM"/>
    <property type="resolution" value="2.68 A"/>
    <property type="chains" value="A/B/C/D=1-1200"/>
</dbReference>
<dbReference type="PDB" id="7PXG">
    <property type="method" value="EM"/>
    <property type="resolution" value="2.73 A"/>
    <property type="chains" value="A/B/C/D=1-1200"/>
</dbReference>
<dbReference type="PDB" id="7PXH">
    <property type="method" value="EM"/>
    <property type="resolution" value="2.59 A"/>
    <property type="chains" value="A/B/C/D=1-1200"/>
</dbReference>
<dbReference type="PDBsum" id="7PXE"/>
<dbReference type="PDBsum" id="7PXF"/>
<dbReference type="PDBsum" id="7PXG"/>
<dbReference type="PDBsum" id="7PXH"/>
<dbReference type="EMDB" id="EMD-13700"/>
<dbReference type="EMDB" id="EMD-13701"/>
<dbReference type="EMDB" id="EMD-13702"/>
<dbReference type="EMDB" id="EMD-13703"/>
<dbReference type="SMR" id="Q03720"/>
<dbReference type="BioGRID" id="67865">
    <property type="interactions" value="12"/>
</dbReference>
<dbReference type="FunCoup" id="Q03720">
    <property type="interactions" value="406"/>
</dbReference>
<dbReference type="IntAct" id="Q03720">
    <property type="interactions" value="9"/>
</dbReference>
<dbReference type="STRING" id="7227.FBpp0303318"/>
<dbReference type="TCDB" id="1.A.1.3.1">
    <property type="family name" value="the voltage-gated ion channel (vic) superfamily"/>
</dbReference>
<dbReference type="iPTMnet" id="Q03720"/>
<dbReference type="PaxDb" id="7227-FBpp0303318"/>
<dbReference type="EnsemblMetazoa" id="FBtr0084683">
    <molecule id="Q03720-7"/>
    <property type="protein sequence ID" value="FBpp0084063"/>
    <property type="gene ID" value="FBgn0003429"/>
</dbReference>
<dbReference type="EnsemblMetazoa" id="FBtr0084684">
    <molecule id="Q03720-5"/>
    <property type="protein sequence ID" value="FBpp0084064"/>
    <property type="gene ID" value="FBgn0003429"/>
</dbReference>
<dbReference type="EnsemblMetazoa" id="FBtr0084685">
    <molecule id="Q03720-8"/>
    <property type="protein sequence ID" value="FBpp0089227"/>
    <property type="gene ID" value="FBgn0003429"/>
</dbReference>
<dbReference type="EnsemblMetazoa" id="FBtr0100622">
    <molecule id="Q03720-9"/>
    <property type="protein sequence ID" value="FBpp0100082"/>
    <property type="gene ID" value="FBgn0003429"/>
</dbReference>
<dbReference type="EnsemblMetazoa" id="FBtr0100623">
    <molecule id="Q03720-10"/>
    <property type="protein sequence ID" value="FBpp0100083"/>
    <property type="gene ID" value="FBgn0003429"/>
</dbReference>
<dbReference type="EnsemblMetazoa" id="FBtr0100624">
    <molecule id="Q03720-11"/>
    <property type="protein sequence ID" value="FBpp0100084"/>
    <property type="gene ID" value="FBgn0003429"/>
</dbReference>
<dbReference type="EnsemblMetazoa" id="FBtr0100627">
    <molecule id="Q03720-12"/>
    <property type="protein sequence ID" value="FBpp0100086"/>
    <property type="gene ID" value="FBgn0003429"/>
</dbReference>
<dbReference type="EnsemblMetazoa" id="FBtr0100629">
    <molecule id="Q03720-13"/>
    <property type="protein sequence ID" value="FBpp0100089"/>
    <property type="gene ID" value="FBgn0003429"/>
</dbReference>
<dbReference type="EnsemblMetazoa" id="FBtr0100631">
    <molecule id="Q03720-14"/>
    <property type="protein sequence ID" value="FBpp0100091"/>
    <property type="gene ID" value="FBgn0003429"/>
</dbReference>
<dbReference type="EnsemblMetazoa" id="FBtr0100632">
    <molecule id="Q03720-15"/>
    <property type="protein sequence ID" value="FBpp0100092"/>
    <property type="gene ID" value="FBgn0003429"/>
</dbReference>
<dbReference type="EnsemblMetazoa" id="FBtr0100633">
    <molecule id="Q03720-16"/>
    <property type="protein sequence ID" value="FBpp0100093"/>
    <property type="gene ID" value="FBgn0003429"/>
</dbReference>
<dbReference type="EnsemblMetazoa" id="FBtr0100634">
    <molecule id="Q03720-17"/>
    <property type="protein sequence ID" value="FBpp0100094"/>
    <property type="gene ID" value="FBgn0003429"/>
</dbReference>
<dbReference type="EnsemblMetazoa" id="FBtr0100635">
    <molecule id="Q03720-1"/>
    <property type="protein sequence ID" value="FBpp0100095"/>
    <property type="gene ID" value="FBgn0003429"/>
</dbReference>
<dbReference type="EnsemblMetazoa" id="FBtr0100636">
    <molecule id="Q03720-18"/>
    <property type="protein sequence ID" value="FBpp0100096"/>
    <property type="gene ID" value="FBgn0003429"/>
</dbReference>
<dbReference type="EnsemblMetazoa" id="FBtr0100637">
    <molecule id="Q03720-19"/>
    <property type="protein sequence ID" value="FBpp0100097"/>
    <property type="gene ID" value="FBgn0003429"/>
</dbReference>
<dbReference type="EnsemblMetazoa" id="FBtr0100638">
    <molecule id="Q03720-20"/>
    <property type="protein sequence ID" value="FBpp0100098"/>
    <property type="gene ID" value="FBgn0003429"/>
</dbReference>
<dbReference type="EnsemblMetazoa" id="FBtr0301581">
    <molecule id="Q03720-3"/>
    <property type="protein sequence ID" value="FBpp0290796"/>
    <property type="gene ID" value="FBgn0003429"/>
</dbReference>
<dbReference type="GeneID" id="42940"/>
<dbReference type="KEGG" id="dme:Dmel_CG10693"/>
<dbReference type="UCSC" id="CG10693-RA">
    <property type="organism name" value="d. melanogaster"/>
</dbReference>
<dbReference type="UCSC" id="CG10693-RG">
    <property type="organism name" value="d. melanogaster"/>
</dbReference>
<dbReference type="AGR" id="FB:FBgn0003429"/>
<dbReference type="CTD" id="42940"/>
<dbReference type="FlyBase" id="FBgn0003429">
    <property type="gene designation" value="slo"/>
</dbReference>
<dbReference type="VEuPathDB" id="VectorBase:FBgn0003429"/>
<dbReference type="eggNOG" id="KOG1420">
    <property type="taxonomic scope" value="Eukaryota"/>
</dbReference>
<dbReference type="GeneTree" id="ENSGT00940000168407"/>
<dbReference type="InParanoid" id="Q03720"/>
<dbReference type="OMA" id="YWCKQCH"/>
<dbReference type="OrthoDB" id="10035564at2759"/>
<dbReference type="PhylomeDB" id="Q03720"/>
<dbReference type="Reactome" id="R-DME-1300642">
    <property type="pathway name" value="Sperm Motility And Taxes"/>
</dbReference>
<dbReference type="SignaLink" id="Q03720"/>
<dbReference type="BioGRID-ORCS" id="42940">
    <property type="hits" value="0 hits in 3 CRISPR screens"/>
</dbReference>
<dbReference type="ChiTaRS" id="slo">
    <property type="organism name" value="fly"/>
</dbReference>
<dbReference type="GenomeRNAi" id="42940"/>
<dbReference type="PRO" id="PR:Q03720"/>
<dbReference type="Proteomes" id="UP000000803">
    <property type="component" value="Chromosome 3R"/>
</dbReference>
<dbReference type="Bgee" id="FBgn0003429">
    <property type="expression patterns" value="Expressed in lamina monopolar neuron L1 (Drosophila) in insect head and 220 other cell types or tissues"/>
</dbReference>
<dbReference type="ExpressionAtlas" id="Q03720">
    <property type="expression patterns" value="baseline and differential"/>
</dbReference>
<dbReference type="GO" id="GO:0016020">
    <property type="term" value="C:membrane"/>
    <property type="evidence" value="ECO:0000314"/>
    <property type="project" value="FlyBase"/>
</dbReference>
<dbReference type="GO" id="GO:0034702">
    <property type="term" value="C:monoatomic ion channel complex"/>
    <property type="evidence" value="ECO:0007669"/>
    <property type="project" value="UniProtKB-KW"/>
</dbReference>
<dbReference type="GO" id="GO:0043005">
    <property type="term" value="C:neuron projection"/>
    <property type="evidence" value="ECO:0000314"/>
    <property type="project" value="FlyBase"/>
</dbReference>
<dbReference type="GO" id="GO:0043025">
    <property type="term" value="C:neuronal cell body"/>
    <property type="evidence" value="ECO:0000314"/>
    <property type="project" value="FlyBase"/>
</dbReference>
<dbReference type="GO" id="GO:0005886">
    <property type="term" value="C:plasma membrane"/>
    <property type="evidence" value="ECO:0000303"/>
    <property type="project" value="FlyBase"/>
</dbReference>
<dbReference type="GO" id="GO:0045211">
    <property type="term" value="C:postsynaptic membrane"/>
    <property type="evidence" value="ECO:0000318"/>
    <property type="project" value="GO_Central"/>
</dbReference>
<dbReference type="GO" id="GO:0015269">
    <property type="term" value="F:calcium-activated potassium channel activity"/>
    <property type="evidence" value="ECO:0000314"/>
    <property type="project" value="UniProtKB"/>
</dbReference>
<dbReference type="GO" id="GO:0060072">
    <property type="term" value="F:large conductance calcium-activated potassium channel activity"/>
    <property type="evidence" value="ECO:0000318"/>
    <property type="project" value="GO_Central"/>
</dbReference>
<dbReference type="GO" id="GO:0048512">
    <property type="term" value="P:circadian behavior"/>
    <property type="evidence" value="ECO:0000315"/>
    <property type="project" value="FlyBase"/>
</dbReference>
<dbReference type="GO" id="GO:0007623">
    <property type="term" value="P:circadian rhythm"/>
    <property type="evidence" value="ECO:0000315"/>
    <property type="project" value="FlyBase"/>
</dbReference>
<dbReference type="GO" id="GO:0045433">
    <property type="term" value="P:male courtship behavior, veined wing generated song production"/>
    <property type="evidence" value="ECO:0000315"/>
    <property type="project" value="FlyBase"/>
</dbReference>
<dbReference type="GO" id="GO:1900074">
    <property type="term" value="P:negative regulation of neuromuscular synaptic transmission"/>
    <property type="evidence" value="ECO:0000315"/>
    <property type="project" value="FlyBase"/>
</dbReference>
<dbReference type="GO" id="GO:0071805">
    <property type="term" value="P:potassium ion transmembrane transport"/>
    <property type="evidence" value="ECO:0000318"/>
    <property type="project" value="GO_Central"/>
</dbReference>
<dbReference type="GO" id="GO:0006813">
    <property type="term" value="P:potassium ion transport"/>
    <property type="evidence" value="ECO:0000314"/>
    <property type="project" value="UniProtKB"/>
</dbReference>
<dbReference type="GO" id="GO:0008582">
    <property type="term" value="P:regulation of synaptic assembly at neuromuscular junction"/>
    <property type="evidence" value="ECO:0000315"/>
    <property type="project" value="FlyBase"/>
</dbReference>
<dbReference type="GO" id="GO:0009410">
    <property type="term" value="P:response to xenobiotic stimulus"/>
    <property type="evidence" value="ECO:0000315"/>
    <property type="project" value="FlyBase"/>
</dbReference>
<dbReference type="FunFam" id="1.20.120.350:FF:000035">
    <property type="entry name" value="Calcium-activated potassium channel slowpoke"/>
    <property type="match status" value="1"/>
</dbReference>
<dbReference type="FunFam" id="3.40.50.720:FF:001832">
    <property type="entry name" value="Calcium-activated potassium channel slowpoke-like Protein"/>
    <property type="match status" value="1"/>
</dbReference>
<dbReference type="FunFam" id="1.10.287.70:FF:000015">
    <property type="entry name" value="Calcium-activated potassium channel subunit alpha-1 isoform X7"/>
    <property type="match status" value="1"/>
</dbReference>
<dbReference type="Gene3D" id="1.10.287.70">
    <property type="match status" value="1"/>
</dbReference>
<dbReference type="Gene3D" id="3.40.50.720">
    <property type="entry name" value="NAD(P)-binding Rossmann-like Domain"/>
    <property type="match status" value="2"/>
</dbReference>
<dbReference type="InterPro" id="IPR005821">
    <property type="entry name" value="Ion_trans_dom"/>
</dbReference>
<dbReference type="InterPro" id="IPR003929">
    <property type="entry name" value="K_chnl_BK_asu"/>
</dbReference>
<dbReference type="InterPro" id="IPR047871">
    <property type="entry name" value="K_chnl_Slo-like"/>
</dbReference>
<dbReference type="InterPro" id="IPR036291">
    <property type="entry name" value="NAD(P)-bd_dom_sf"/>
</dbReference>
<dbReference type="InterPro" id="IPR003148">
    <property type="entry name" value="RCK_N"/>
</dbReference>
<dbReference type="InterPro" id="IPR048735">
    <property type="entry name" value="Slowpoke-like_C"/>
</dbReference>
<dbReference type="PANTHER" id="PTHR10027">
    <property type="entry name" value="CALCIUM-ACTIVATED POTASSIUM CHANNEL ALPHA CHAIN"/>
    <property type="match status" value="1"/>
</dbReference>
<dbReference type="PANTHER" id="PTHR10027:SF33">
    <property type="entry name" value="CALCIUM-ACTIVATED POTASSIUM CHANNEL SUBUNIT ALPHA-1-RELATED"/>
    <property type="match status" value="1"/>
</dbReference>
<dbReference type="Pfam" id="PF03493">
    <property type="entry name" value="BK_channel_a"/>
    <property type="match status" value="1"/>
</dbReference>
<dbReference type="Pfam" id="PF00520">
    <property type="entry name" value="Ion_trans"/>
    <property type="match status" value="1"/>
</dbReference>
<dbReference type="Pfam" id="PF22614">
    <property type="entry name" value="Slo-like_RCK"/>
    <property type="match status" value="2"/>
</dbReference>
<dbReference type="Pfam" id="PF21014">
    <property type="entry name" value="Slowpoke_C"/>
    <property type="match status" value="1"/>
</dbReference>
<dbReference type="PRINTS" id="PR01449">
    <property type="entry name" value="BKCHANNELA"/>
</dbReference>
<dbReference type="PRINTS" id="PR00169">
    <property type="entry name" value="KCHANNEL"/>
</dbReference>
<dbReference type="SUPFAM" id="SSF51735">
    <property type="entry name" value="NAD(P)-binding Rossmann-fold domains"/>
    <property type="match status" value="1"/>
</dbReference>
<dbReference type="SUPFAM" id="SSF81324">
    <property type="entry name" value="Voltage-gated potassium channels"/>
    <property type="match status" value="1"/>
</dbReference>
<dbReference type="PROSITE" id="PS51201">
    <property type="entry name" value="RCK_N"/>
    <property type="match status" value="2"/>
</dbReference>
<comment type="function">
    <text evidence="8 9">Potassium channel activated by both membrane depolarization or increase in cytosolic Ca(2+) that mediates export of K(+). Its activation dampens the excitatory events that elevate the cytosolic Ca(2+) concentration and/or depolarize the cell membrane. It therefore contributes to repolarization of the membrane potential. Kinetics are determined by alternative splicing, phosphorylation status and its combination interaction with Slob and 14-3-3-zeta. While the interaction with Slob1 alone increases its activity, its interaction with both Slob1 and 14-3-3-zeta decreases its activity.</text>
</comment>
<comment type="subunit">
    <text evidence="1 5 12 13">Homotetramer; which constitutes the calcium-activated potassium channel (By similarity). Interacts with Slip1. Interacts with Slob, and, indirectly with 14-3-3-zeta via its interaction with Slob. Interacts with Pka-C1 and Src kinases, which can bind simultaneously to it.</text>
</comment>
<comment type="interaction">
    <interactant intactId="EBI-426805">
        <id>Q03720</id>
    </interactant>
    <interactant intactId="EBI-82224">
        <id>P12370</id>
        <label>Pka-C1</label>
    </interactant>
    <organismsDiffer>false</organismsDiffer>
    <experiments>5</experiments>
</comment>
<comment type="interaction">
    <interactant intactId="EBI-426805">
        <id>Q03720</id>
    </interactant>
    <interactant intactId="EBI-123875">
        <id>Q8MR31</id>
        <label>Slip1</label>
    </interactant>
    <organismsDiffer>false</organismsDiffer>
    <experiments>5</experiments>
</comment>
<comment type="interaction">
    <interactant intactId="EBI-426805">
        <id>Q03720</id>
    </interactant>
    <interactant intactId="EBI-424896">
        <id>Q8IPH9-1</id>
        <label>Slob</label>
    </interactant>
    <organismsDiffer>false</organismsDiffer>
    <experiments>2</experiments>
</comment>
<comment type="interaction">
    <interactant intactId="EBI-426805">
        <id>Q03720</id>
    </interactant>
    <interactant intactId="EBI-87092">
        <id>P00528</id>
        <label>Src64B</label>
    </interactant>
    <organismsDiffer>false</organismsDiffer>
    <experiments>3</experiments>
</comment>
<comment type="subcellular location">
    <subcellularLocation>
        <location evidence="17">Membrane</location>
        <topology evidence="17">Multi-pass membrane protein</topology>
    </subcellularLocation>
</comment>
<comment type="alternative products">
    <event type="alternative splicing"/>
    <isoform>
        <id>Q03720-1</id>
        <name>N</name>
        <sequence type="displayed"/>
    </isoform>
    <isoform>
        <id>Q03720-2</id>
        <name>2</name>
        <sequence type="described" ref="VSP_050267 VSP_050268"/>
    </isoform>
    <isoform>
        <id>Q03720-4</id>
        <name>3</name>
        <sequence type="described" ref="VSP_050268"/>
    </isoform>
    <isoform>
        <id>Q03720-6</id>
        <name>5</name>
        <sequence type="described" ref="VSP_010001 VSP_010002 VSP_050267 VSP_050268"/>
    </isoform>
    <isoform>
        <id>Q03720-3</id>
        <name>6</name>
        <sequence type="described" ref="VSP_009999 VSP_010000 VSP_010001 VSP_010003 VSP_050268"/>
    </isoform>
    <isoform>
        <id>Q03720-5</id>
        <name>A</name>
        <name>G</name>
        <sequence type="described" ref="VSP_010004"/>
    </isoform>
    <isoform>
        <id>Q03720-7</id>
        <name>B</name>
        <sequence type="described" ref="VSP_009999"/>
    </isoform>
    <isoform>
        <id>Q03720-8</id>
        <name>C</name>
        <sequence type="described" ref="VSP_009999 VSP_010002"/>
    </isoform>
    <isoform>
        <id>Q03720-9</id>
        <name>D</name>
        <sequence type="described" ref="VSP_020625 VSP_010004"/>
    </isoform>
    <isoform>
        <id>Q03720-10</id>
        <name>E</name>
        <sequence type="described" ref="VSP_010000 VSP_010004"/>
    </isoform>
    <isoform>
        <id>Q03720-11</id>
        <name>F</name>
        <sequence type="described" ref="VSP_010001 VSP_010004"/>
    </isoform>
    <isoform>
        <id>Q03720-12</id>
        <name>H</name>
        <sequence type="described" ref="VSP_010002 VSP_010004"/>
    </isoform>
    <isoform>
        <id>Q03720-13</id>
        <name>I</name>
        <sequence type="described" ref="VSP_050267"/>
    </isoform>
    <isoform>
        <id>Q03720-14</id>
        <name>J</name>
        <sequence type="described" ref="VSP_020627"/>
    </isoform>
    <isoform>
        <id>Q03720-15</id>
        <name>K</name>
        <sequence type="described" ref="VSP_020628"/>
    </isoform>
    <isoform>
        <id>Q03720-16</id>
        <name>L</name>
        <sequence type="described" ref="VSP_020626"/>
    </isoform>
    <isoform>
        <id>Q03720-17</id>
        <name>M</name>
        <sequence type="described" ref="VSP_010004 VSP_050268"/>
    </isoform>
    <isoform>
        <id>Q03720-18</id>
        <name>O</name>
        <sequence type="described" ref="VSP_010002 VSP_020628"/>
    </isoform>
    <isoform>
        <id>Q03720-19</id>
        <name>P</name>
        <sequence type="described" ref="VSP_010000 VSP_010002 VSP_020628"/>
    </isoform>
    <isoform>
        <id>Q03720-20</id>
        <name>Q</name>
        <sequence type="described" ref="VSP_010000 VSP_010002 VSP_010004"/>
    </isoform>
    <text>Additional isoforms seem to exist.</text>
</comment>
<comment type="tissue specificity">
    <text evidence="10 11">Expressed in muscle cells, neurons of the CNS and PNS, mushroom bodies, a limited number of cells in embryonic and larval midgut and in epithelial-derived tracheal cells. During pupariation and embryogenesis, it is expressed in muscles many hours prior to the appearance of functional channels.</text>
</comment>
<comment type="domain">
    <text evidence="1">The S4 segment, which is characterized by a series of positively charged amino acids at every third position, is part of the voltage-sensor.</text>
</comment>
<comment type="domain">
    <text evidence="1">The pore-forming domain (also referred as P region) is imbedded into the membrane, and forms the selectivity filter of the pore. It contains the signature sequence of potassium channels that displays selectivity to potassium (By similarity).</text>
</comment>
<comment type="domain">
    <text evidence="1">The RCK N-terminal domain mediates the homotetramerization, thereby promoting the assembly of monomers into functional potassium channel. It includes binding sites for Ca(2+) and Mg(2+) (By similarity).</text>
</comment>
<comment type="domain">
    <text evidence="6">The calcium bowl constitutes one of the Ca(2+) sensors and probably acts as a Ca(2+)-binding site.</text>
</comment>
<comment type="PTM">
    <text evidence="5 7">Phosphorylated. Phosphorylation may be mediated by both PKA and SRC kinases, which activate the channel activity. Phosphorylation by PKA is however unclear. Indeed, although modulation of channel activity requires Pka-C1, it does not interact with the whole PKA holoenzyme. Moreover, modulation of activity does not depend upon phosphorylation of Ser-978.</text>
</comment>
<comment type="similarity">
    <text evidence="17">Belongs to the potassium channel family. Calcium-activated (TC 1.A.1.3) subfamily. Slo sub-subfamily.</text>
</comment>
<comment type="sequence caution" evidence="17">
    <conflict type="erroneous initiation">
        <sequence resource="EMBL-CDS" id="AAA28902"/>
    </conflict>
    <text>Extended N-terminus.</text>
</comment>
<comment type="sequence caution" evidence="17">
    <conflict type="frameshift">
        <sequence resource="EMBL-CDS" id="AAO45232"/>
    </conflict>
</comment>
<name>SLO_DROME</name>
<gene>
    <name type="primary">slo</name>
    <name type="ORF">CG10693</name>
</gene>
<organism>
    <name type="scientific">Drosophila melanogaster</name>
    <name type="common">Fruit fly</name>
    <dbReference type="NCBI Taxonomy" id="7227"/>
    <lineage>
        <taxon>Eukaryota</taxon>
        <taxon>Metazoa</taxon>
        <taxon>Ecdysozoa</taxon>
        <taxon>Arthropoda</taxon>
        <taxon>Hexapoda</taxon>
        <taxon>Insecta</taxon>
        <taxon>Pterygota</taxon>
        <taxon>Neoptera</taxon>
        <taxon>Endopterygota</taxon>
        <taxon>Diptera</taxon>
        <taxon>Brachycera</taxon>
        <taxon>Muscomorpha</taxon>
        <taxon>Ephydroidea</taxon>
        <taxon>Drosophilidae</taxon>
        <taxon>Drosophila</taxon>
        <taxon>Sophophora</taxon>
    </lineage>
</organism>
<proteinExistence type="evidence at protein level"/>
<feature type="chain" id="PRO_0000054141" description="Calcium-activated potassium channel slowpoke">
    <location>
        <begin position="1"/>
        <end position="1200"/>
    </location>
</feature>
<feature type="topological domain" description="Extracellular" evidence="2">
    <location>
        <begin position="1"/>
        <end position="48"/>
    </location>
</feature>
<feature type="transmembrane region" description="Helical; Name=Segment S0" evidence="2">
    <location>
        <begin position="49"/>
        <end position="69"/>
    </location>
</feature>
<feature type="topological domain" description="Cytoplasmic" evidence="2">
    <location>
        <begin position="70"/>
        <end position="127"/>
    </location>
</feature>
<feature type="transmembrane region" description="Helical; Name=Segment S1" evidence="2">
    <location>
        <begin position="128"/>
        <end position="149"/>
    </location>
</feature>
<feature type="topological domain" description="Extracellular" evidence="2">
    <location>
        <begin position="150"/>
        <end position="164"/>
    </location>
</feature>
<feature type="transmembrane region" description="Helical; Name=Segment S2" evidence="2">
    <location>
        <begin position="165"/>
        <end position="185"/>
    </location>
</feature>
<feature type="topological domain" description="Cytoplasmic" evidence="2">
    <location>
        <begin position="186"/>
        <end position="189"/>
    </location>
</feature>
<feature type="transmembrane region" description="Helical; Name=Segment S3" evidence="2">
    <location>
        <begin position="190"/>
        <end position="210"/>
    </location>
</feature>
<feature type="topological domain" description="Extracellular" evidence="2">
    <location>
        <begin position="211"/>
        <end position="214"/>
    </location>
</feature>
<feature type="transmembrane region" description="Helical; Voltage-sensor; Name=Segment S4" evidence="2">
    <location>
        <begin position="215"/>
        <end position="235"/>
    </location>
</feature>
<feature type="topological domain" description="Cytoplasmic" evidence="2">
    <location>
        <begin position="236"/>
        <end position="250"/>
    </location>
</feature>
<feature type="transmembrane region" description="Helical; Name=Segment S5" evidence="2">
    <location>
        <begin position="251"/>
        <end position="271"/>
    </location>
</feature>
<feature type="topological domain" description="Extracellular" evidence="2">
    <location>
        <begin position="272"/>
        <end position="284"/>
    </location>
</feature>
<feature type="intramembrane region" description="Pore-forming; Name=P region" evidence="2">
    <location>
        <begin position="285"/>
        <end position="307"/>
    </location>
</feature>
<feature type="topological domain" description="Extracellular" evidence="2">
    <location>
        <begin position="308"/>
        <end position="316"/>
    </location>
</feature>
<feature type="transmembrane region" description="Helical; Name=Segment S6" evidence="2">
    <location>
        <begin position="317"/>
        <end position="337"/>
    </location>
</feature>
<feature type="topological domain" description="Cytoplasmic" evidence="2">
    <location>
        <begin position="338"/>
        <end position="1200"/>
    </location>
</feature>
<feature type="domain" description="RCK N-terminal 1" evidence="3">
    <location>
        <begin position="356"/>
        <end position="498"/>
    </location>
</feature>
<feature type="domain" description="RCK N-terminal 2" evidence="3">
    <location>
        <begin position="830"/>
        <end position="974"/>
    </location>
</feature>
<feature type="region of interest" description="Segment S7">
    <location>
        <begin position="505"/>
        <end position="525"/>
    </location>
</feature>
<feature type="region of interest" description="Segment S8">
    <location>
        <begin position="563"/>
        <end position="583"/>
    </location>
</feature>
<feature type="region of interest" description="Disordered" evidence="4">
    <location>
        <begin position="681"/>
        <end position="713"/>
    </location>
</feature>
<feature type="region of interest" description="Disordered" evidence="4">
    <location>
        <begin position="746"/>
        <end position="785"/>
    </location>
</feature>
<feature type="region of interest" description="Segment S9">
    <location>
        <begin position="828"/>
        <end position="848"/>
    </location>
</feature>
<feature type="region of interest" description="Segment S10">
    <location>
        <begin position="1017"/>
        <end position="1037"/>
    </location>
</feature>
<feature type="region of interest" description="Disordered" evidence="4">
    <location>
        <begin position="1170"/>
        <end position="1200"/>
    </location>
</feature>
<feature type="short sequence motif" description="Selectivity for potassium">
    <location>
        <begin position="301"/>
        <end position="304"/>
    </location>
</feature>
<feature type="short sequence motif" description="Calcium bowl">
    <location>
        <begin position="988"/>
        <end position="1010"/>
    </location>
</feature>
<feature type="compositionally biased region" description="Polar residues" evidence="4">
    <location>
        <begin position="746"/>
        <end position="776"/>
    </location>
</feature>
<feature type="modified residue" description="Phosphoserine" evidence="5">
    <location>
        <position position="978"/>
    </location>
</feature>
<feature type="splice variant" id="VSP_009999" description="In isoform 6, isoform B and isoform C." evidence="14 16">
    <location>
        <begin position="1"/>
        <end position="17"/>
    </location>
</feature>
<feature type="splice variant" id="VSP_010000" description="In isoform 6, isoform E, isoform P and isoform Q." evidence="14 15">
    <original>MFASSIPEIIELVGSGNKYGGELKREHGK</original>
    <variation>IFASCIPEIIDLIGTRAKYGGTLKNEKGR</variation>
    <location>
        <begin position="328"/>
        <end position="356"/>
    </location>
</feature>
<feature type="splice variant" id="VSP_020625" description="In isoform D." evidence="15">
    <original>MFASSIPEIIELVGSGNKYGGELKREHG</original>
    <variation>VFASWIPEITELAAQRSKYGGTYSKDPR</variation>
    <location>
        <begin position="328"/>
        <end position="355"/>
    </location>
</feature>
<feature type="splice variant" id="VSP_010001" description="In isoform 5, isoform 6 and isoform F." evidence="14 15">
    <original>PPDLELEGLFKRHFTTVEFFQGTIMNPIDLQ</original>
    <variation>EPDLELEGLLKRHYTTVAFFQGTMMNAVDLE</variation>
    <location>
        <begin position="396"/>
        <end position="426"/>
    </location>
</feature>
<feature type="splice variant" id="VSP_010002" description="In isoform 5, isoform C, isoform H, isoform O, isoform P and isoform Q." evidence="15">
    <original>MQSWTNDYLRGTGMEMYTETLSPTFIGIPFAQAT</original>
    <variation>TQAWQNDYLQGTGCEMYTETLSPSFTGMTFPQAS</variation>
    <location>
        <begin position="536"/>
        <end position="569"/>
    </location>
</feature>
<feature type="splice variant" id="VSP_020626" description="In isoform L." evidence="15">
    <original>LTVQPRSKFDDLDEHHPAPTFTPPELPKRVHVRGSVS</original>
    <variation>YVGMIMMQTGMVNQGITSVMNTME</variation>
    <location>
        <begin position="649"/>
        <end position="685"/>
    </location>
</feature>
<feature type="splice variant" id="VSP_020627" description="In isoform J." evidence="15">
    <original>TVQPRSKFDDLDEHHPAPTFTPPELPKRVHVRGSVSG</original>
    <variation>ATFRKGVRAVQMVGRAS</variation>
    <location>
        <begin position="650"/>
        <end position="686"/>
    </location>
</feature>
<feature type="splice variant" id="VSP_050267" description="In isoform 2, isoform 5 and isoform I." evidence="15 16">
    <original>TVQPRSKFDDLD</original>
    <variation>ATFRKGVRAVQMVGRAKDDEYSLSN</variation>
    <location>
        <begin position="650"/>
        <end position="661"/>
    </location>
</feature>
<feature type="splice variant" id="VSP_010003" description="In isoform 6." evidence="14">
    <original>TVQPRSKFDDLD</original>
    <variation>ATFRKGVRAVQMVGRAN</variation>
    <location>
        <begin position="650"/>
        <end position="661"/>
    </location>
</feature>
<feature type="splice variant" id="VSP_020628" description="In isoform K, isoform O and isoform P." evidence="15">
    <original>DEHHPAPTFTPPELPKRVHVRGSVSGDITRDREDTNL</original>
    <variation>V</variation>
    <location>
        <begin position="661"/>
        <end position="697"/>
    </location>
</feature>
<feature type="splice variant" id="VSP_010004" description="In isoform A, isoform D, isoform E, isoform F, isoform H, isoform M and isoform Q." evidence="15">
    <location>
        <begin position="661"/>
        <end position="685"/>
    </location>
</feature>
<feature type="splice variant" id="VSP_050268" description="In isoform 2, isoform 3, isoform 5, isoform 6 and isoform M." evidence="14 15 16">
    <original>P</original>
    <variation>PPENDANPYAGYQLAYEVKKLMP</variation>
    <location>
        <position position="761"/>
    </location>
</feature>
<feature type="mutagenesis site" description="Affects the interaction with SRC." evidence="5">
    <original>Y</original>
    <variation>F</variation>
    <location>
        <position position="552"/>
    </location>
</feature>
<feature type="mutagenesis site" description="Does not affect activation of channel." evidence="5">
    <original>S</original>
    <variation>A</variation>
    <location>
        <position position="978"/>
    </location>
</feature>
<feature type="mutagenesis site" description="Alters calcium binding." evidence="6">
    <original>DDDDD</original>
    <variation>NNNNN</variation>
    <location>
        <begin position="1002"/>
        <end position="1006"/>
    </location>
</feature>
<feature type="mutagenesis site" description="Affects the interaction with SRC." evidence="5">
    <original>Y</original>
    <variation>F</variation>
    <location>
        <position position="1012"/>
    </location>
</feature>
<feature type="sequence conflict" description="In Ref. 6; AAC47020/AAC47021." evidence="17" ref="6">
    <original>E</original>
    <variation>R</variation>
    <location>
        <position position="81"/>
    </location>
</feature>
<feature type="sequence conflict" description="In Ref. 1; AAA28902, 2; AAA28651 and 5; AAO45232." evidence="17" ref="1 2 5">
    <original>N</original>
    <variation>D</variation>
    <location>
        <position position="281"/>
    </location>
</feature>
<feature type="sequence conflict" description="In Ref. 1; AAA28902, 2; AAA28651 and 5; AAO45232." evidence="17" ref="1 2 5">
    <original>S</original>
    <variation>G</variation>
    <location>
        <position position="994"/>
    </location>
</feature>
<feature type="helix" evidence="18">
    <location>
        <begin position="49"/>
        <end position="76"/>
    </location>
</feature>
<feature type="helix" evidence="18">
    <location>
        <begin position="107"/>
        <end position="119"/>
    </location>
</feature>
<feature type="helix" evidence="18">
    <location>
        <begin position="124"/>
        <end position="148"/>
    </location>
</feature>
<feature type="strand" evidence="19">
    <location>
        <begin position="149"/>
        <end position="151"/>
    </location>
</feature>
<feature type="strand" evidence="18">
    <location>
        <begin position="153"/>
        <end position="156"/>
    </location>
</feature>
<feature type="turn" evidence="18">
    <location>
        <begin position="159"/>
        <end position="161"/>
    </location>
</feature>
<feature type="helix" evidence="18">
    <location>
        <begin position="163"/>
        <end position="185"/>
    </location>
</feature>
<feature type="helix" evidence="18">
    <location>
        <begin position="189"/>
        <end position="193"/>
    </location>
</feature>
<feature type="helix" evidence="18">
    <location>
        <begin position="196"/>
        <end position="202"/>
    </location>
</feature>
<feature type="helix" evidence="18">
    <location>
        <begin position="205"/>
        <end position="214"/>
    </location>
</feature>
<feature type="strand" evidence="18">
    <location>
        <begin position="216"/>
        <end position="218"/>
    </location>
</feature>
<feature type="helix" evidence="18">
    <location>
        <begin position="222"/>
        <end position="231"/>
    </location>
</feature>
<feature type="helix" evidence="18">
    <location>
        <begin position="232"/>
        <end position="238"/>
    </location>
</feature>
<feature type="helix" evidence="18">
    <location>
        <begin position="245"/>
        <end position="274"/>
    </location>
</feature>
<feature type="turn" evidence="18">
    <location>
        <begin position="277"/>
        <end position="279"/>
    </location>
</feature>
<feature type="helix" evidence="18">
    <location>
        <begin position="288"/>
        <end position="299"/>
    </location>
</feature>
<feature type="strand" evidence="20">
    <location>
        <begin position="305"/>
        <end position="307"/>
    </location>
</feature>
<feature type="helix" evidence="18">
    <location>
        <begin position="312"/>
        <end position="340"/>
    </location>
</feature>
<feature type="strand" evidence="18">
    <location>
        <begin position="357"/>
        <end position="364"/>
    </location>
</feature>
<feature type="helix" evidence="18">
    <location>
        <begin position="367"/>
        <end position="377"/>
    </location>
</feature>
<feature type="strand" evidence="20">
    <location>
        <begin position="380"/>
        <end position="382"/>
    </location>
</feature>
<feature type="strand" evidence="18">
    <location>
        <begin position="387"/>
        <end position="395"/>
    </location>
</feature>
<feature type="helix" evidence="18">
    <location>
        <begin position="399"/>
        <end position="407"/>
    </location>
</feature>
<feature type="turn" evidence="18">
    <location>
        <begin position="408"/>
        <end position="411"/>
    </location>
</feature>
<feature type="strand" evidence="18">
    <location>
        <begin position="412"/>
        <end position="416"/>
    </location>
</feature>
<feature type="helix" evidence="18">
    <location>
        <begin position="422"/>
        <end position="427"/>
    </location>
</feature>
<feature type="helix" evidence="18">
    <location>
        <begin position="430"/>
        <end position="432"/>
    </location>
</feature>
<feature type="strand" evidence="18">
    <location>
        <begin position="434"/>
        <end position="439"/>
    </location>
</feature>
<feature type="helix" evidence="18">
    <location>
        <begin position="447"/>
        <end position="464"/>
    </location>
</feature>
<feature type="strand" evidence="18">
    <location>
        <begin position="469"/>
        <end position="475"/>
    </location>
</feature>
<feature type="helix" evidence="18">
    <location>
        <begin position="477"/>
        <end position="479"/>
    </location>
</feature>
<feature type="helix" evidence="18">
    <location>
        <begin position="480"/>
        <end position="484"/>
    </location>
</feature>
<feature type="turn" evidence="18">
    <location>
        <begin position="491"/>
        <end position="494"/>
    </location>
</feature>
<feature type="strand" evidence="18">
    <location>
        <begin position="496"/>
        <end position="499"/>
    </location>
</feature>
<feature type="helix" evidence="18">
    <location>
        <begin position="500"/>
        <end position="513"/>
    </location>
</feature>
<feature type="helix" evidence="18">
    <location>
        <begin position="517"/>
        <end position="524"/>
    </location>
</feature>
<feature type="strand" evidence="20">
    <location>
        <begin position="534"/>
        <end position="536"/>
    </location>
</feature>
<feature type="helix" evidence="18">
    <location>
        <begin position="538"/>
        <end position="547"/>
    </location>
</feature>
<feature type="strand" evidence="18">
    <location>
        <begin position="550"/>
        <end position="555"/>
    </location>
</feature>
<feature type="helix" evidence="18">
    <location>
        <begin position="558"/>
        <end position="560"/>
    </location>
</feature>
<feature type="helix" evidence="18">
    <location>
        <begin position="565"/>
        <end position="574"/>
    </location>
</feature>
<feature type="strand" evidence="18">
    <location>
        <begin position="579"/>
        <end position="585"/>
    </location>
</feature>
<feature type="strand" evidence="18">
    <location>
        <begin position="595"/>
        <end position="599"/>
    </location>
</feature>
<feature type="strand" evidence="18">
    <location>
        <begin position="610"/>
        <end position="617"/>
    </location>
</feature>
<feature type="helix" evidence="18">
    <location>
        <begin position="618"/>
        <end position="625"/>
    </location>
</feature>
<feature type="strand" evidence="18">
    <location>
        <begin position="800"/>
        <end position="807"/>
    </location>
</feature>
<feature type="helix" evidence="18">
    <location>
        <begin position="815"/>
        <end position="817"/>
    </location>
</feature>
<feature type="helix" evidence="18">
    <location>
        <begin position="821"/>
        <end position="825"/>
    </location>
</feature>
<feature type="strand" evidence="18">
    <location>
        <begin position="833"/>
        <end position="838"/>
    </location>
</feature>
<feature type="helix" evidence="18">
    <location>
        <begin position="849"/>
        <end position="852"/>
    </location>
</feature>
<feature type="helix" evidence="18">
    <location>
        <begin position="853"/>
        <end position="856"/>
    </location>
</feature>
<feature type="turn" evidence="19">
    <location>
        <begin position="862"/>
        <end position="864"/>
    </location>
</feature>
<feature type="strand" evidence="18">
    <location>
        <begin position="868"/>
        <end position="872"/>
    </location>
</feature>
<feature type="helix" evidence="18">
    <location>
        <begin position="874"/>
        <end position="880"/>
    </location>
</feature>
<feature type="helix" evidence="18">
    <location>
        <begin position="881"/>
        <end position="883"/>
    </location>
</feature>
<feature type="turn" evidence="18">
    <location>
        <begin position="884"/>
        <end position="886"/>
    </location>
</feature>
<feature type="strand" evidence="18">
    <location>
        <begin position="888"/>
        <end position="895"/>
    </location>
</feature>
<feature type="helix" evidence="18">
    <location>
        <begin position="900"/>
        <end position="905"/>
    </location>
</feature>
<feature type="helix" evidence="18">
    <location>
        <begin position="908"/>
        <end position="910"/>
    </location>
</feature>
<feature type="strand" evidence="18">
    <location>
        <begin position="912"/>
        <end position="918"/>
    </location>
</feature>
<feature type="helix" evidence="18">
    <location>
        <begin position="927"/>
        <end position="929"/>
    </location>
</feature>
<feature type="helix" evidence="18">
    <location>
        <begin position="932"/>
        <end position="942"/>
    </location>
</feature>
<feature type="helix" evidence="18">
    <location>
        <begin position="981"/>
        <end position="983"/>
    </location>
</feature>
<feature type="strand" evidence="18">
    <location>
        <begin position="986"/>
        <end position="989"/>
    </location>
</feature>
<feature type="helix" evidence="18">
    <location>
        <begin position="993"/>
        <end position="998"/>
    </location>
</feature>
<feature type="strand" evidence="18">
    <location>
        <begin position="1001"/>
        <end position="1003"/>
    </location>
</feature>
<feature type="helix" evidence="18">
    <location>
        <begin position="1011"/>
        <end position="1013"/>
    </location>
</feature>
<feature type="helix" evidence="18">
    <location>
        <begin position="1015"/>
        <end position="1018"/>
    </location>
</feature>
<feature type="strand" evidence="20">
    <location>
        <begin position="1022"/>
        <end position="1024"/>
    </location>
</feature>
<feature type="helix" evidence="18">
    <location>
        <begin position="1025"/>
        <end position="1030"/>
    </location>
</feature>
<feature type="helix" evidence="18">
    <location>
        <begin position="1031"/>
        <end position="1037"/>
    </location>
</feature>
<feature type="helix" evidence="18">
    <location>
        <begin position="1039"/>
        <end position="1049"/>
    </location>
</feature>
<feature type="helix" evidence="18">
    <location>
        <begin position="1055"/>
        <end position="1063"/>
    </location>
</feature>
<feature type="turn" evidence="18">
    <location>
        <begin position="1074"/>
        <end position="1077"/>
    </location>
</feature>
<feature type="helix" evidence="18">
    <location>
        <begin position="1078"/>
        <end position="1080"/>
    </location>
</feature>
<feature type="strand" evidence="18">
    <location>
        <begin position="1084"/>
        <end position="1093"/>
    </location>
</feature>
<feature type="helix" evidence="18">
    <location>
        <begin position="1096"/>
        <end position="1101"/>
    </location>
</feature>
<feature type="helix" evidence="18">
    <location>
        <begin position="1104"/>
        <end position="1115"/>
    </location>
</feature>
<feature type="strand" evidence="18">
    <location>
        <begin position="1118"/>
        <end position="1126"/>
    </location>
</feature>
<feature type="strand" evidence="18">
    <location>
        <begin position="1138"/>
        <end position="1143"/>
    </location>
</feature>
<feature type="strand" evidence="18">
    <location>
        <begin position="1155"/>
        <end position="1160"/>
    </location>
</feature>
<sequence length="1200" mass="133102">MASGLIDTNFSSTLANGMSGCDQSTVESLADDPTDSPFDADDCLKVRKYWCFLLSSIFTFLAGLLVVLLWRAFAFVCCRKEPDLGPNDPKQKEQKASRNKQEFEGTFMTEAKDWAGELISGQTTTGRILVVLVFILSIASLIIYFVDASSEEVERCQKWSNNITQQIDLAFNIFFMVYFFIRFIAASDKLWFMLEMYSFVDYFTIPPSFVSIYLDRTWIGLRFLRALRLMTVPDILQYLNVLKTSSSIRLAQLVSIFISVWLTAAGIIHLLENSGDPLDFNNAHRLSYWTCVYFLIVTMSTVGYGDVYCETVLGRTFLVFFLLVGLAMFASSIPEIIELVGSGNKYGGELKREHGKRHIVVCGHITYESVSHFLKDFLHEDREDVDVEVVFLHRKPPDLELEGLFKRHFTTVEFFQGTIMNPIDLQRVKVHEADACLVLANKYCQDPDAEDAANIMRVISIKNYSDDIRVIIQLMQYHNKAYLLNIPSWDWKQGDDVICLAELKLGFIAQSCLAPGFSTMMANLFAMRSFKTSPDMQSWTNDYLRGTGMEMYTETLSPTFIGIPFAQATELCFSKLKLLLLAIEIKGAEEGADSKISINPRGAKIQANTQGFFIAQSADEVKRAWFYCKACHEDIKDETLIKKCKCKNLTVQPRSKFDDLDEHHPAPTFTPPELPKRVHVRGSVSGDITRDREDTNLLNRNVRRPNGTGNGTGGMHHMNNTAAAAAAAAAAGKQVNKVKPTVNVSRQVEGQVISPSQYNRPTSRSSGTGTQNQNGGVSLPAGIADDQSKDFDFEKTEMKYDSTGMFHWSPAKSLEDCILDRNQAAMTVLNGHVVVCLFADPDSPLIGLRNLVMPLRASNFHYHELKHVVIVGSVDYIRREWKMLQNLPKISVLNGSPLSRADLRAVNVNLCDMCCILSAKVPSNDDPTLADKEAILASLNIKAMTFDDTIGVLSQRGPEFDNLSATAGSPIVLQRRGSVYGANVPMITELVNDSNVQFLDQDDDDDPDTELYLTQPFACGTAFAVSVLDSLMSTTYFNQNALTLIRSLITGGATPELELILAEGAGLRGGYSTVESLSNRDRCRVGQISLYDGPLAQFGECGKYGDLFVAALKSYGMLCIGLYRFRDTSSSCDASSKRYVITNPPDDFSLLPTDQVFVLMQFDPGLEYKPPAVRAPAGGRGTNTQGSGVGGGGSNKDDNS</sequence>
<keyword id="KW-0002">3D-structure</keyword>
<keyword id="KW-0025">Alternative splicing</keyword>
<keyword id="KW-0106">Calcium</keyword>
<keyword id="KW-0407">Ion channel</keyword>
<keyword id="KW-0406">Ion transport</keyword>
<keyword id="KW-0472">Membrane</keyword>
<keyword id="KW-0597">Phosphoprotein</keyword>
<keyword id="KW-0630">Potassium</keyword>
<keyword id="KW-0631">Potassium channel</keyword>
<keyword id="KW-0633">Potassium transport</keyword>
<keyword id="KW-1185">Reference proteome</keyword>
<keyword id="KW-0812">Transmembrane</keyword>
<keyword id="KW-1133">Transmembrane helix</keyword>
<keyword id="KW-0813">Transport</keyword>
<keyword id="KW-0851">Voltage-gated channel</keyword>
<reference key="1">
    <citation type="journal article" date="1991" name="Science">
        <title>A component of calcium-activated potassium channels encoded by the Drosophila slo locus.</title>
        <authorList>
            <person name="Atkinson N.S."/>
            <person name="Robertson G.A."/>
            <person name="Ganetzky B."/>
        </authorList>
    </citation>
    <scope>NUCLEOTIDE SEQUENCE [MRNA] (ISOFORM B)</scope>
    <scope>NUCLEOTIDE SEQUENCE [MRNA] OF 17-1200 (ISOFORMS 2 AND 3)</scope>
    <scope>FUNCTION</scope>
    <source>
        <tissue>Head</tissue>
    </source>
</reference>
<reference key="2">
    <citation type="journal article" date="1992" name="Neuron">
        <title>Calcium-activated potassium channels expressed from cloned complementary DNAs.</title>
        <authorList>
            <person name="Adelman J.P."/>
            <person name="Shen K.-Z."/>
            <person name="Kavanaugh M.P."/>
            <person name="Warren R.A."/>
            <person name="Wu Y.-N."/>
            <person name="Lagrutta A."/>
            <person name="Bond C.T."/>
            <person name="North R.A."/>
        </authorList>
    </citation>
    <scope>NUCLEOTIDE SEQUENCE [MRNA] (ISOFORMS 5; A; D; E; H; I; J; L; N; P AND Q)</scope>
    <scope>FUNCTION</scope>
    <source>
        <strain>Canton-S</strain>
        <tissue>Head</tissue>
    </source>
</reference>
<reference key="3">
    <citation type="journal article" date="2000" name="Science">
        <title>The genome sequence of Drosophila melanogaster.</title>
        <authorList>
            <person name="Adams M.D."/>
            <person name="Celniker S.E."/>
            <person name="Holt R.A."/>
            <person name="Evans C.A."/>
            <person name="Gocayne J.D."/>
            <person name="Amanatides P.G."/>
            <person name="Scherer S.E."/>
            <person name="Li P.W."/>
            <person name="Hoskins R.A."/>
            <person name="Galle R.F."/>
            <person name="George R.A."/>
            <person name="Lewis S.E."/>
            <person name="Richards S."/>
            <person name="Ashburner M."/>
            <person name="Henderson S.N."/>
            <person name="Sutton G.G."/>
            <person name="Wortman J.R."/>
            <person name="Yandell M.D."/>
            <person name="Zhang Q."/>
            <person name="Chen L.X."/>
            <person name="Brandon R.C."/>
            <person name="Rogers Y.-H.C."/>
            <person name="Blazej R.G."/>
            <person name="Champe M."/>
            <person name="Pfeiffer B.D."/>
            <person name="Wan K.H."/>
            <person name="Doyle C."/>
            <person name="Baxter E.G."/>
            <person name="Helt G."/>
            <person name="Nelson C.R."/>
            <person name="Miklos G.L.G."/>
            <person name="Abril J.F."/>
            <person name="Agbayani A."/>
            <person name="An H.-J."/>
            <person name="Andrews-Pfannkoch C."/>
            <person name="Baldwin D."/>
            <person name="Ballew R.M."/>
            <person name="Basu A."/>
            <person name="Baxendale J."/>
            <person name="Bayraktaroglu L."/>
            <person name="Beasley E.M."/>
            <person name="Beeson K.Y."/>
            <person name="Benos P.V."/>
            <person name="Berman B.P."/>
            <person name="Bhandari D."/>
            <person name="Bolshakov S."/>
            <person name="Borkova D."/>
            <person name="Botchan M.R."/>
            <person name="Bouck J."/>
            <person name="Brokstein P."/>
            <person name="Brottier P."/>
            <person name="Burtis K.C."/>
            <person name="Busam D.A."/>
            <person name="Butler H."/>
            <person name="Cadieu E."/>
            <person name="Center A."/>
            <person name="Chandra I."/>
            <person name="Cherry J.M."/>
            <person name="Cawley S."/>
            <person name="Dahlke C."/>
            <person name="Davenport L.B."/>
            <person name="Davies P."/>
            <person name="de Pablos B."/>
            <person name="Delcher A."/>
            <person name="Deng Z."/>
            <person name="Mays A.D."/>
            <person name="Dew I."/>
            <person name="Dietz S.M."/>
            <person name="Dodson K."/>
            <person name="Doup L.E."/>
            <person name="Downes M."/>
            <person name="Dugan-Rocha S."/>
            <person name="Dunkov B.C."/>
            <person name="Dunn P."/>
            <person name="Durbin K.J."/>
            <person name="Evangelista C.C."/>
            <person name="Ferraz C."/>
            <person name="Ferriera S."/>
            <person name="Fleischmann W."/>
            <person name="Fosler C."/>
            <person name="Gabrielian A.E."/>
            <person name="Garg N.S."/>
            <person name="Gelbart W.M."/>
            <person name="Glasser K."/>
            <person name="Glodek A."/>
            <person name="Gong F."/>
            <person name="Gorrell J.H."/>
            <person name="Gu Z."/>
            <person name="Guan P."/>
            <person name="Harris M."/>
            <person name="Harris N.L."/>
            <person name="Harvey D.A."/>
            <person name="Heiman T.J."/>
            <person name="Hernandez J.R."/>
            <person name="Houck J."/>
            <person name="Hostin D."/>
            <person name="Houston K.A."/>
            <person name="Howland T.J."/>
            <person name="Wei M.-H."/>
            <person name="Ibegwam C."/>
            <person name="Jalali M."/>
            <person name="Kalush F."/>
            <person name="Karpen G.H."/>
            <person name="Ke Z."/>
            <person name="Kennison J.A."/>
            <person name="Ketchum K.A."/>
            <person name="Kimmel B.E."/>
            <person name="Kodira C.D."/>
            <person name="Kraft C.L."/>
            <person name="Kravitz S."/>
            <person name="Kulp D."/>
            <person name="Lai Z."/>
            <person name="Lasko P."/>
            <person name="Lei Y."/>
            <person name="Levitsky A.A."/>
            <person name="Li J.H."/>
            <person name="Li Z."/>
            <person name="Liang Y."/>
            <person name="Lin X."/>
            <person name="Liu X."/>
            <person name="Mattei B."/>
            <person name="McIntosh T.C."/>
            <person name="McLeod M.P."/>
            <person name="McPherson D."/>
            <person name="Merkulov G."/>
            <person name="Milshina N.V."/>
            <person name="Mobarry C."/>
            <person name="Morris J."/>
            <person name="Moshrefi A."/>
            <person name="Mount S.M."/>
            <person name="Moy M."/>
            <person name="Murphy B."/>
            <person name="Murphy L."/>
            <person name="Muzny D.M."/>
            <person name="Nelson D.L."/>
            <person name="Nelson D.R."/>
            <person name="Nelson K.A."/>
            <person name="Nixon K."/>
            <person name="Nusskern D.R."/>
            <person name="Pacleb J.M."/>
            <person name="Palazzolo M."/>
            <person name="Pittman G.S."/>
            <person name="Pan S."/>
            <person name="Pollard J."/>
            <person name="Puri V."/>
            <person name="Reese M.G."/>
            <person name="Reinert K."/>
            <person name="Remington K."/>
            <person name="Saunders R.D.C."/>
            <person name="Scheeler F."/>
            <person name="Shen H."/>
            <person name="Shue B.C."/>
            <person name="Siden-Kiamos I."/>
            <person name="Simpson M."/>
            <person name="Skupski M.P."/>
            <person name="Smith T.J."/>
            <person name="Spier E."/>
            <person name="Spradling A.C."/>
            <person name="Stapleton M."/>
            <person name="Strong R."/>
            <person name="Sun E."/>
            <person name="Svirskas R."/>
            <person name="Tector C."/>
            <person name="Turner R."/>
            <person name="Venter E."/>
            <person name="Wang A.H."/>
            <person name="Wang X."/>
            <person name="Wang Z.-Y."/>
            <person name="Wassarman D.A."/>
            <person name="Weinstock G.M."/>
            <person name="Weissenbach J."/>
            <person name="Williams S.M."/>
            <person name="Woodage T."/>
            <person name="Worley K.C."/>
            <person name="Wu D."/>
            <person name="Yang S."/>
            <person name="Yao Q.A."/>
            <person name="Ye J."/>
            <person name="Yeh R.-F."/>
            <person name="Zaveri J.S."/>
            <person name="Zhan M."/>
            <person name="Zhang G."/>
            <person name="Zhao Q."/>
            <person name="Zheng L."/>
            <person name="Zheng X.H."/>
            <person name="Zhong F.N."/>
            <person name="Zhong W."/>
            <person name="Zhou X."/>
            <person name="Zhu S.C."/>
            <person name="Zhu X."/>
            <person name="Smith H.O."/>
            <person name="Gibbs R.A."/>
            <person name="Myers E.W."/>
            <person name="Rubin G.M."/>
            <person name="Venter J.C."/>
        </authorList>
    </citation>
    <scope>NUCLEOTIDE SEQUENCE [LARGE SCALE GENOMIC DNA]</scope>
    <source>
        <strain>Berkeley</strain>
    </source>
</reference>
<reference key="4">
    <citation type="journal article" date="2002" name="Genome Biol.">
        <title>Annotation of the Drosophila melanogaster euchromatic genome: a systematic review.</title>
        <authorList>
            <person name="Misra S."/>
            <person name="Crosby M.A."/>
            <person name="Mungall C.J."/>
            <person name="Matthews B.B."/>
            <person name="Campbell K.S."/>
            <person name="Hradecky P."/>
            <person name="Huang Y."/>
            <person name="Kaminker J.S."/>
            <person name="Millburn G.H."/>
            <person name="Prochnik S.E."/>
            <person name="Smith C.D."/>
            <person name="Tupy J.L."/>
            <person name="Whitfield E.J."/>
            <person name="Bayraktaroglu L."/>
            <person name="Berman B.P."/>
            <person name="Bettencourt B.R."/>
            <person name="Celniker S.E."/>
            <person name="de Grey A.D.N.J."/>
            <person name="Drysdale R.A."/>
            <person name="Harris N.L."/>
            <person name="Richter J."/>
            <person name="Russo S."/>
            <person name="Schroeder A.J."/>
            <person name="Shu S.Q."/>
            <person name="Stapleton M."/>
            <person name="Yamada C."/>
            <person name="Ashburner M."/>
            <person name="Gelbart W.M."/>
            <person name="Rubin G.M."/>
            <person name="Lewis S.E."/>
        </authorList>
    </citation>
    <scope>GENOME REANNOTATION</scope>
    <scope>ALTERNATIVE SPLICING</scope>
    <source>
        <strain>Berkeley</strain>
    </source>
</reference>
<reference key="5">
    <citation type="journal article" date="2002" name="Genome Biol.">
        <title>A Drosophila full-length cDNA resource.</title>
        <authorList>
            <person name="Stapleton M."/>
            <person name="Carlson J.W."/>
            <person name="Brokstein P."/>
            <person name="Yu C."/>
            <person name="Champe M."/>
            <person name="George R.A."/>
            <person name="Guarin H."/>
            <person name="Kronmiller B."/>
            <person name="Pacleb J.M."/>
            <person name="Park S."/>
            <person name="Wan K.H."/>
            <person name="Rubin G.M."/>
            <person name="Celniker S.E."/>
        </authorList>
    </citation>
    <scope>NUCLEOTIDE SEQUENCE [LARGE SCALE MRNA] (ISOFORM 6)</scope>
    <source>
        <strain>Berkeley</strain>
        <tissue>Embryo</tissue>
    </source>
</reference>
<reference key="6">
    <citation type="journal article" date="1996" name="J. Neurosci.">
        <title>Tissue-specific expression of a Ca(2+)-activated K+ channel is controlled by multiple upstream regulatory elements.</title>
        <authorList>
            <person name="Brenner R."/>
            <person name="Thomas T.O."/>
            <person name="Becker M.N."/>
            <person name="Atkinson N.S."/>
        </authorList>
    </citation>
    <scope>NUCLEOTIDE SEQUENCE [GENOMIC DNA] OF 1-82</scope>
    <scope>TISSUE SPECIFICITY</scope>
    <source>
        <strain>Iso-1</strain>
    </source>
</reference>
<reference key="7">
    <citation type="journal article" date="1995" name="J. Neurosci.">
        <title>Tissue-specific expression of a Drosophila calcium-activated potassium channel.</title>
        <authorList>
            <person name="Becker M.N."/>
            <person name="Brenner R."/>
            <person name="Atkinson N.S."/>
        </authorList>
    </citation>
    <scope>TISSUE SPECIFICITY</scope>
</reference>
<reference key="8">
    <citation type="journal article" date="1998" name="J. Neurosci.">
        <title>dSLo interacting protein 1, a novel protein that interacts with large-conductance calcium-activated potassium channels.</title>
        <authorList>
            <person name="Xia X.-M."/>
            <person name="Hirschberg B."/>
            <person name="Smolik S."/>
            <person name="Forte M."/>
            <person name="Adelman J.P."/>
        </authorList>
    </citation>
    <scope>INTERACTION WITH SLIP1</scope>
</reference>
<reference key="9">
    <citation type="journal article" date="1998" name="Neuron">
        <title>Slob, a novel protein that interacts with the Slowpoke calcium-dependent potassium channel.</title>
        <authorList>
            <person name="Schopperle W.M."/>
            <person name="Holmqvist M.H."/>
            <person name="Zhou Y."/>
            <person name="Wang J."/>
            <person name="Wang Z."/>
            <person name="Griffith L.C."/>
            <person name="Keselman I."/>
            <person name="Kusinitz F."/>
            <person name="Dagan D."/>
            <person name="Levitan I.B."/>
        </authorList>
    </citation>
    <scope>INTERACTION WITH SLOB</scope>
</reference>
<reference key="10">
    <citation type="journal article" date="1999" name="J. Neurosci.">
        <title>Simultaneous binding of two protein kinases to a calcium-dependent potassium channel.</title>
        <authorList>
            <person name="Wang J."/>
            <person name="Zhou Y."/>
            <person name="Wen H."/>
            <person name="Levitan I.B."/>
        </authorList>
    </citation>
    <scope>INTERACTION WITH PKA AND SRC</scope>
    <scope>PHOSPHORYLATION AT SER-978</scope>
    <scope>MUTAGENESIS OF TYR-552; SER-978 AND TYR-1012</scope>
</reference>
<reference key="11">
    <citation type="journal article" date="1999" name="Neuron">
        <title>A dynamically regulated 14-3-3, Slob, and Slowpoke potassium channel complex in Drosophila presynaptic nerve terminals.</title>
        <authorList>
            <person name="Zhou Y."/>
            <person name="Schopperle W.M."/>
            <person name="Murrey H."/>
            <person name="Jaramillo A."/>
            <person name="Dagan D."/>
            <person name="Griffith L.C."/>
            <person name="Levitan I.B."/>
        </authorList>
    </citation>
    <scope>INDIRECT INTERACTION WITH 14-3-3-ZETA</scope>
</reference>
<reference key="12">
    <citation type="journal article" date="2001" name="Proc. Natl. Acad. Sci. U.S.A.">
        <title>Ca2+-binding activity of a COOH-terminal fragment of the Drosophila BK channel involved in Ca2+-dependent activation.</title>
        <authorList>
            <person name="Bian S."/>
            <person name="Favre I."/>
            <person name="Moczydlowski E."/>
        </authorList>
    </citation>
    <scope>DOMAIN CALCIUM BOWL</scope>
    <scope>MUTAGENESIS OF 1002-ASP--ASP-1006</scope>
</reference>
<reference key="13">
    <citation type="journal article" date="2002" name="J. Neurosci.">
        <title>Modulation of Drosophila slowpoke calcium-dependent potassium channel activity by bound protein kinase a catalytic subunit.</title>
        <authorList>
            <person name="Zhou Y."/>
            <person name="Wang J."/>
            <person name="Wen H."/>
            <person name="Kucherovsky O."/>
            <person name="Levitan I.B."/>
        </authorList>
    </citation>
    <scope>PHOSPHORYLATION</scope>
</reference>
<protein>
    <recommendedName>
        <fullName>Calcium-activated potassium channel slowpoke</fullName>
        <shortName>dSlo</shortName>
    </recommendedName>
    <alternativeName>
        <fullName>BK channel</fullName>
    </alternativeName>
    <alternativeName>
        <fullName>Maxi K channel</fullName>
        <shortName>MaxiK</shortName>
    </alternativeName>
</protein>